<keyword id="KW-0479">Metal-binding</keyword>
<keyword id="KW-1267">Proteomics identification</keyword>
<keyword id="KW-1185">Reference proteome</keyword>
<keyword id="KW-0862">Zinc</keyword>
<keyword id="KW-0863">Zinc-finger</keyword>
<gene>
    <name type="primary">ZBED5</name>
    <name type="synonym">Buster1</name>
</gene>
<protein>
    <recommendedName>
        <fullName>Zinc finger BED domain-containing protein 5</fullName>
    </recommendedName>
    <alternativeName>
        <fullName>Transposon-derived Buster1 transposase-like protein</fullName>
    </alternativeName>
</protein>
<feature type="chain" id="PRO_0000291958" description="Zinc finger BED domain-containing protein 5">
    <location>
        <begin position="1"/>
        <end position="693"/>
    </location>
</feature>
<feature type="zinc finger region" description="BED-type" evidence="1">
    <location>
        <begin position="108"/>
        <end position="164"/>
    </location>
</feature>
<feature type="binding site" evidence="1">
    <location>
        <position position="132"/>
    </location>
    <ligand>
        <name>Zn(2+)</name>
        <dbReference type="ChEBI" id="CHEBI:29105"/>
    </ligand>
</feature>
<feature type="binding site" evidence="1">
    <location>
        <position position="135"/>
    </location>
    <ligand>
        <name>Zn(2+)</name>
        <dbReference type="ChEBI" id="CHEBI:29105"/>
    </ligand>
</feature>
<feature type="binding site" evidence="1">
    <location>
        <position position="152"/>
    </location>
    <ligand>
        <name>Zn(2+)</name>
        <dbReference type="ChEBI" id="CHEBI:29105"/>
    </ligand>
</feature>
<feature type="binding site" evidence="1">
    <location>
        <position position="157"/>
    </location>
    <ligand>
        <name>Zn(2+)</name>
        <dbReference type="ChEBI" id="CHEBI:29105"/>
    </ligand>
</feature>
<feature type="sequence variant" id="VAR_032895" description="In dbSNP:rs2232918.">
    <original>A</original>
    <variation>V</variation>
    <location>
        <position position="17"/>
    </location>
</feature>
<feature type="sequence variant" id="VAR_032896" description="In dbSNP:rs2232919.">
    <original>Q</original>
    <variation>R</variation>
    <location>
        <position position="47"/>
    </location>
</feature>
<feature type="sequence variant" id="VAR_032897" description="In dbSNP:rs2232920.">
    <original>P</original>
    <variation>S</variation>
    <location>
        <position position="77"/>
    </location>
</feature>
<feature type="sequence variant" id="VAR_059741" description="In dbSNP:rs1046297." evidence="2">
    <original>I</original>
    <variation>V</variation>
    <location>
        <position position="480"/>
    </location>
</feature>
<dbReference type="EMBL" id="AF205600">
    <property type="protein sequence ID" value="AAF18454.1"/>
    <property type="molecule type" value="mRNA"/>
</dbReference>
<dbReference type="EMBL" id="AF205601">
    <property type="protein sequence ID" value="AAF18455.1"/>
    <property type="molecule type" value="Genomic_DNA"/>
</dbReference>
<dbReference type="EMBL" id="AK315033">
    <property type="protein sequence ID" value="BAG37518.1"/>
    <property type="molecule type" value="mRNA"/>
</dbReference>
<dbReference type="EMBL" id="AC069360">
    <property type="status" value="NOT_ANNOTATED_CDS"/>
    <property type="molecule type" value="Genomic_DNA"/>
</dbReference>
<dbReference type="EMBL" id="CH471064">
    <property type="protein sequence ID" value="EAW68550.1"/>
    <property type="molecule type" value="Genomic_DNA"/>
</dbReference>
<dbReference type="EMBL" id="BC017803">
    <property type="protein sequence ID" value="AAH17803.1"/>
    <property type="status" value="ALT_SEQ"/>
    <property type="molecule type" value="mRNA"/>
</dbReference>
<dbReference type="EMBL" id="BC047754">
    <property type="protein sequence ID" value="AAH47754.1"/>
    <property type="status" value="ALT_FRAME"/>
    <property type="molecule type" value="mRNA"/>
</dbReference>
<dbReference type="EMBL" id="AL137577">
    <property type="protein sequence ID" value="CAB70820.2"/>
    <property type="molecule type" value="mRNA"/>
</dbReference>
<dbReference type="PIR" id="T46273">
    <property type="entry name" value="T46273"/>
</dbReference>
<dbReference type="RefSeq" id="NP_001137139.1">
    <property type="nucleotide sequence ID" value="NM_001143667.2"/>
</dbReference>
<dbReference type="RefSeq" id="NP_067034.2">
    <property type="nucleotide sequence ID" value="NM_021211.3"/>
</dbReference>
<dbReference type="BioGRID" id="121816">
    <property type="interactions" value="9"/>
</dbReference>
<dbReference type="FunCoup" id="Q49AG3">
    <property type="interactions" value="348"/>
</dbReference>
<dbReference type="IntAct" id="Q49AG3">
    <property type="interactions" value="11"/>
</dbReference>
<dbReference type="MINT" id="Q49AG3"/>
<dbReference type="STRING" id="9606.ENSP00000398106"/>
<dbReference type="GlyGen" id="Q49AG3">
    <property type="glycosylation" value="2 sites, 1 N-linked glycan (2 sites)"/>
</dbReference>
<dbReference type="iPTMnet" id="Q49AG3"/>
<dbReference type="PhosphoSitePlus" id="Q49AG3"/>
<dbReference type="SwissPalm" id="Q49AG3"/>
<dbReference type="BioMuta" id="ZBED5"/>
<dbReference type="DMDM" id="150416326"/>
<dbReference type="jPOST" id="Q49AG3"/>
<dbReference type="MassIVE" id="Q49AG3"/>
<dbReference type="PaxDb" id="9606-ENSP00000398106"/>
<dbReference type="PeptideAtlas" id="Q49AG3"/>
<dbReference type="ProteomicsDB" id="62042"/>
<dbReference type="Pumba" id="Q49AG3"/>
<dbReference type="Antibodypedia" id="24475">
    <property type="antibodies" value="62 antibodies from 12 providers"/>
</dbReference>
<dbReference type="DNASU" id="58486"/>
<dbReference type="Ensembl" id="ENST00000413761.7">
    <property type="protein sequence ID" value="ENSP00000415939.2"/>
    <property type="gene ID" value="ENSG00000236287.8"/>
</dbReference>
<dbReference type="Ensembl" id="ENST00000432999.6">
    <property type="protein sequence ID" value="ENSP00000398106.2"/>
    <property type="gene ID" value="ENSG00000236287.8"/>
</dbReference>
<dbReference type="GeneID" id="58486"/>
<dbReference type="KEGG" id="hsa:58486"/>
<dbReference type="MANE-Select" id="ENST00000413761.7">
    <property type="protein sequence ID" value="ENSP00000415939.2"/>
    <property type="RefSeq nucleotide sequence ID" value="NM_001143667.2"/>
    <property type="RefSeq protein sequence ID" value="NP_001137139.1"/>
</dbReference>
<dbReference type="UCSC" id="uc001mji.4">
    <property type="organism name" value="human"/>
</dbReference>
<dbReference type="AGR" id="HGNC:30803"/>
<dbReference type="CTD" id="58486"/>
<dbReference type="GeneCards" id="ZBED5"/>
<dbReference type="HGNC" id="HGNC:30803">
    <property type="gene designation" value="ZBED5"/>
</dbReference>
<dbReference type="HPA" id="ENSG00000236287">
    <property type="expression patterns" value="Low tissue specificity"/>
</dbReference>
<dbReference type="MIM" id="615251">
    <property type="type" value="gene"/>
</dbReference>
<dbReference type="neXtProt" id="NX_Q49AG3"/>
<dbReference type="OpenTargets" id="ENSG00000236287"/>
<dbReference type="PharmGKB" id="PA147357120"/>
<dbReference type="VEuPathDB" id="HostDB:ENSG00000236287"/>
<dbReference type="eggNOG" id="ENOG502QT83">
    <property type="taxonomic scope" value="Eukaryota"/>
</dbReference>
<dbReference type="GeneTree" id="ENSGT00940000162521"/>
<dbReference type="HOGENOM" id="CLU_021316_5_0_1"/>
<dbReference type="InParanoid" id="Q49AG3"/>
<dbReference type="OMA" id="CSKLTMF"/>
<dbReference type="OrthoDB" id="1101576at2759"/>
<dbReference type="PAN-GO" id="Q49AG3">
    <property type="GO annotations" value="0 GO annotations based on evolutionary models"/>
</dbReference>
<dbReference type="PhylomeDB" id="Q49AG3"/>
<dbReference type="TreeFam" id="TF328297"/>
<dbReference type="PathwayCommons" id="Q49AG3"/>
<dbReference type="SignaLink" id="Q49AG3"/>
<dbReference type="BioGRID-ORCS" id="58486">
    <property type="hits" value="3 hits in 288 CRISPR screens"/>
</dbReference>
<dbReference type="ChiTaRS" id="ZBED5">
    <property type="organism name" value="human"/>
</dbReference>
<dbReference type="GenomeRNAi" id="58486"/>
<dbReference type="Pharos" id="Q49AG3">
    <property type="development level" value="Tdark"/>
</dbReference>
<dbReference type="PRO" id="PR:Q49AG3"/>
<dbReference type="Proteomes" id="UP000005640">
    <property type="component" value="Chromosome 11"/>
</dbReference>
<dbReference type="RNAct" id="Q49AG3">
    <property type="molecule type" value="protein"/>
</dbReference>
<dbReference type="Bgee" id="ENSG00000236287">
    <property type="expression patterns" value="Expressed in tibia and 203 other cell types or tissues"/>
</dbReference>
<dbReference type="ExpressionAtlas" id="Q49AG3">
    <property type="expression patterns" value="baseline and differential"/>
</dbReference>
<dbReference type="GO" id="GO:0003677">
    <property type="term" value="F:DNA binding"/>
    <property type="evidence" value="ECO:0007669"/>
    <property type="project" value="InterPro"/>
</dbReference>
<dbReference type="GO" id="GO:0008270">
    <property type="term" value="F:zinc ion binding"/>
    <property type="evidence" value="ECO:0007669"/>
    <property type="project" value="UniProtKB-KW"/>
</dbReference>
<dbReference type="InterPro" id="IPR012337">
    <property type="entry name" value="RNaseH-like_sf"/>
</dbReference>
<dbReference type="InterPro" id="IPR003656">
    <property type="entry name" value="Znf_BED"/>
</dbReference>
<dbReference type="PANTHER" id="PTHR45913">
    <property type="entry name" value="EPM2A-INTERACTING PROTEIN 1"/>
    <property type="match status" value="1"/>
</dbReference>
<dbReference type="PANTHER" id="PTHR45913:SF19">
    <property type="entry name" value="LOW QUALITY PROTEIN: ZINC FINGER BED DOMAIN-CONTAINING PROTEIN 5-LIKE"/>
    <property type="match status" value="1"/>
</dbReference>
<dbReference type="Pfam" id="PF02892">
    <property type="entry name" value="zf-BED"/>
    <property type="match status" value="1"/>
</dbReference>
<dbReference type="SUPFAM" id="SSF53098">
    <property type="entry name" value="Ribonuclease H-like"/>
    <property type="match status" value="1"/>
</dbReference>
<dbReference type="PROSITE" id="PS50808">
    <property type="entry name" value="ZF_BED"/>
    <property type="match status" value="1"/>
</dbReference>
<sequence length="693" mass="78911">MIAPLLCILSYNFNTFAILNVYSKLTMFCTTNSLPMDLLLKQGSLKQEVESFCYQIVSESNDQKVGILQSEDKQLQPSVSKKSEGELSRVKFISNSNKITFSKKPKRRKYDESYLSFGFTYFGNRDAPHAQCVLCKKILSNSSLAPSKLRRHLETKHAAYKDKDISFFKQHLDSPENNKPPTPKIVNTDNESATEASYNVSYHIALSGEAHTIGELLIKPCAKDVVMRMFDEQYSKKIDAVQLSNSTVARRIKDLAADIEEELVCRLKICDGFSLQLDESADVSGLAVLLVFVRYRFNKSIEEDLLLCESLQSNATGEEIFNCINSFMQKHEIEWEKCVDVCSDASRAVDGKIAEAVTLIKYVAPESTSSHCLLYRHALAVKIMPTSLKNVLDQAVQIINYIKARPHQSRLLKILCEEMGAQHTALLLNTEVRWLSRGKVLVRLFELRRELLVFMDSAFRLSDCLTNSSWLLRLAYLADIFTKLNEVNLSMQGKNVTVFTVFDKMSSLLRKLEFWASSVEEENFDCFPTLSDFLTEINSTVDKDICSAIVQHLRGLRATLLKYFPVTNDNNAWVRNPFTVTVKPASLVARDYESLIDLTSDSQVKQNFSELSLNDFWSSLIQEYPSIARRAVRVLLPFATMHLCETGFSYYAATKTKYRKRLDAAPHMRIRLSNITPNIKRICDKKTQKHCSH</sequence>
<proteinExistence type="evidence at protein level"/>
<accession>Q49AG3</accession>
<accession>B2RCC1</accession>
<accession>Q05D82</accession>
<accession>Q86WW3</accession>
<accession>Q9NT24</accession>
<accession>Q9UBJ4</accession>
<evidence type="ECO:0000255" key="1">
    <source>
        <dbReference type="PROSITE-ProRule" id="PRU00027"/>
    </source>
</evidence>
<evidence type="ECO:0000269" key="2">
    <source>
    </source>
</evidence>
<evidence type="ECO:0000305" key="3"/>
<reference key="1">
    <citation type="journal article" date="1999" name="Curr. Opin. Genet. Dev.">
        <title>Interspersed repeats and other mementos of transposable elements in mammalian genomes.</title>
        <authorList>
            <person name="Smit A.F.A."/>
        </authorList>
    </citation>
    <scope>NUCLEOTIDE SEQUENCE [GENOMIC DNA / MRNA]</scope>
    <scope>VARIANT VAL-480</scope>
</reference>
<reference key="2">
    <citation type="journal article" date="2004" name="Nat. Genet.">
        <title>Complete sequencing and characterization of 21,243 full-length human cDNAs.</title>
        <authorList>
            <person name="Ota T."/>
            <person name="Suzuki Y."/>
            <person name="Nishikawa T."/>
            <person name="Otsuki T."/>
            <person name="Sugiyama T."/>
            <person name="Irie R."/>
            <person name="Wakamatsu A."/>
            <person name="Hayashi K."/>
            <person name="Sato H."/>
            <person name="Nagai K."/>
            <person name="Kimura K."/>
            <person name="Makita H."/>
            <person name="Sekine M."/>
            <person name="Obayashi M."/>
            <person name="Nishi T."/>
            <person name="Shibahara T."/>
            <person name="Tanaka T."/>
            <person name="Ishii S."/>
            <person name="Yamamoto J."/>
            <person name="Saito K."/>
            <person name="Kawai Y."/>
            <person name="Isono Y."/>
            <person name="Nakamura Y."/>
            <person name="Nagahari K."/>
            <person name="Murakami K."/>
            <person name="Yasuda T."/>
            <person name="Iwayanagi T."/>
            <person name="Wagatsuma M."/>
            <person name="Shiratori A."/>
            <person name="Sudo H."/>
            <person name="Hosoiri T."/>
            <person name="Kaku Y."/>
            <person name="Kodaira H."/>
            <person name="Kondo H."/>
            <person name="Sugawara M."/>
            <person name="Takahashi M."/>
            <person name="Kanda K."/>
            <person name="Yokoi T."/>
            <person name="Furuya T."/>
            <person name="Kikkawa E."/>
            <person name="Omura Y."/>
            <person name="Abe K."/>
            <person name="Kamihara K."/>
            <person name="Katsuta N."/>
            <person name="Sato K."/>
            <person name="Tanikawa M."/>
            <person name="Yamazaki M."/>
            <person name="Ninomiya K."/>
            <person name="Ishibashi T."/>
            <person name="Yamashita H."/>
            <person name="Murakawa K."/>
            <person name="Fujimori K."/>
            <person name="Tanai H."/>
            <person name="Kimata M."/>
            <person name="Watanabe M."/>
            <person name="Hiraoka S."/>
            <person name="Chiba Y."/>
            <person name="Ishida S."/>
            <person name="Ono Y."/>
            <person name="Takiguchi S."/>
            <person name="Watanabe S."/>
            <person name="Yosida M."/>
            <person name="Hotuta T."/>
            <person name="Kusano J."/>
            <person name="Kanehori K."/>
            <person name="Takahashi-Fujii A."/>
            <person name="Hara H."/>
            <person name="Tanase T.-O."/>
            <person name="Nomura Y."/>
            <person name="Togiya S."/>
            <person name="Komai F."/>
            <person name="Hara R."/>
            <person name="Takeuchi K."/>
            <person name="Arita M."/>
            <person name="Imose N."/>
            <person name="Musashino K."/>
            <person name="Yuuki H."/>
            <person name="Oshima A."/>
            <person name="Sasaki N."/>
            <person name="Aotsuka S."/>
            <person name="Yoshikawa Y."/>
            <person name="Matsunawa H."/>
            <person name="Ichihara T."/>
            <person name="Shiohata N."/>
            <person name="Sano S."/>
            <person name="Moriya S."/>
            <person name="Momiyama H."/>
            <person name="Satoh N."/>
            <person name="Takami S."/>
            <person name="Terashima Y."/>
            <person name="Suzuki O."/>
            <person name="Nakagawa S."/>
            <person name="Senoh A."/>
            <person name="Mizoguchi H."/>
            <person name="Goto Y."/>
            <person name="Shimizu F."/>
            <person name="Wakebe H."/>
            <person name="Hishigaki H."/>
            <person name="Watanabe T."/>
            <person name="Sugiyama A."/>
            <person name="Takemoto M."/>
            <person name="Kawakami B."/>
            <person name="Yamazaki M."/>
            <person name="Watanabe K."/>
            <person name="Kumagai A."/>
            <person name="Itakura S."/>
            <person name="Fukuzumi Y."/>
            <person name="Fujimori Y."/>
            <person name="Komiyama M."/>
            <person name="Tashiro H."/>
            <person name="Tanigami A."/>
            <person name="Fujiwara T."/>
            <person name="Ono T."/>
            <person name="Yamada K."/>
            <person name="Fujii Y."/>
            <person name="Ozaki K."/>
            <person name="Hirao M."/>
            <person name="Ohmori Y."/>
            <person name="Kawabata A."/>
            <person name="Hikiji T."/>
            <person name="Kobatake N."/>
            <person name="Inagaki H."/>
            <person name="Ikema Y."/>
            <person name="Okamoto S."/>
            <person name="Okitani R."/>
            <person name="Kawakami T."/>
            <person name="Noguchi S."/>
            <person name="Itoh T."/>
            <person name="Shigeta K."/>
            <person name="Senba T."/>
            <person name="Matsumura K."/>
            <person name="Nakajima Y."/>
            <person name="Mizuno T."/>
            <person name="Morinaga M."/>
            <person name="Sasaki M."/>
            <person name="Togashi T."/>
            <person name="Oyama M."/>
            <person name="Hata H."/>
            <person name="Watanabe M."/>
            <person name="Komatsu T."/>
            <person name="Mizushima-Sugano J."/>
            <person name="Satoh T."/>
            <person name="Shirai Y."/>
            <person name="Takahashi Y."/>
            <person name="Nakagawa K."/>
            <person name="Okumura K."/>
            <person name="Nagase T."/>
            <person name="Nomura N."/>
            <person name="Kikuchi H."/>
            <person name="Masuho Y."/>
            <person name="Yamashita R."/>
            <person name="Nakai K."/>
            <person name="Yada T."/>
            <person name="Nakamura Y."/>
            <person name="Ohara O."/>
            <person name="Isogai T."/>
            <person name="Sugano S."/>
        </authorList>
    </citation>
    <scope>NUCLEOTIDE SEQUENCE [LARGE SCALE MRNA]</scope>
</reference>
<reference key="3">
    <citation type="journal article" date="2006" name="Nature">
        <title>Human chromosome 11 DNA sequence and analysis including novel gene identification.</title>
        <authorList>
            <person name="Taylor T.D."/>
            <person name="Noguchi H."/>
            <person name="Totoki Y."/>
            <person name="Toyoda A."/>
            <person name="Kuroki Y."/>
            <person name="Dewar K."/>
            <person name="Lloyd C."/>
            <person name="Itoh T."/>
            <person name="Takeda T."/>
            <person name="Kim D.-W."/>
            <person name="She X."/>
            <person name="Barlow K.F."/>
            <person name="Bloom T."/>
            <person name="Bruford E."/>
            <person name="Chang J.L."/>
            <person name="Cuomo C.A."/>
            <person name="Eichler E."/>
            <person name="FitzGerald M.G."/>
            <person name="Jaffe D.B."/>
            <person name="LaButti K."/>
            <person name="Nicol R."/>
            <person name="Park H.-S."/>
            <person name="Seaman C."/>
            <person name="Sougnez C."/>
            <person name="Yang X."/>
            <person name="Zimmer A.R."/>
            <person name="Zody M.C."/>
            <person name="Birren B.W."/>
            <person name="Nusbaum C."/>
            <person name="Fujiyama A."/>
            <person name="Hattori M."/>
            <person name="Rogers J."/>
            <person name="Lander E.S."/>
            <person name="Sakaki Y."/>
        </authorList>
    </citation>
    <scope>NUCLEOTIDE SEQUENCE [LARGE SCALE GENOMIC DNA]</scope>
</reference>
<reference key="4">
    <citation type="submission" date="2005-09" db="EMBL/GenBank/DDBJ databases">
        <authorList>
            <person name="Mural R.J."/>
            <person name="Istrail S."/>
            <person name="Sutton G.G."/>
            <person name="Florea L."/>
            <person name="Halpern A.L."/>
            <person name="Mobarry C.M."/>
            <person name="Lippert R."/>
            <person name="Walenz B."/>
            <person name="Shatkay H."/>
            <person name="Dew I."/>
            <person name="Miller J.R."/>
            <person name="Flanigan M.J."/>
            <person name="Edwards N.J."/>
            <person name="Bolanos R."/>
            <person name="Fasulo D."/>
            <person name="Halldorsson B.V."/>
            <person name="Hannenhalli S."/>
            <person name="Turner R."/>
            <person name="Yooseph S."/>
            <person name="Lu F."/>
            <person name="Nusskern D.R."/>
            <person name="Shue B.C."/>
            <person name="Zheng X.H."/>
            <person name="Zhong F."/>
            <person name="Delcher A.L."/>
            <person name="Huson D.H."/>
            <person name="Kravitz S.A."/>
            <person name="Mouchard L."/>
            <person name="Reinert K."/>
            <person name="Remington K.A."/>
            <person name="Clark A.G."/>
            <person name="Waterman M.S."/>
            <person name="Eichler E.E."/>
            <person name="Adams M.D."/>
            <person name="Hunkapiller M.W."/>
            <person name="Myers E.W."/>
            <person name="Venter J.C."/>
        </authorList>
    </citation>
    <scope>NUCLEOTIDE SEQUENCE [LARGE SCALE GENOMIC DNA]</scope>
</reference>
<reference key="5">
    <citation type="journal article" date="2004" name="Genome Res.">
        <title>The status, quality, and expansion of the NIH full-length cDNA project: the Mammalian Gene Collection (MGC).</title>
        <authorList>
            <consortium name="The MGC Project Team"/>
        </authorList>
    </citation>
    <scope>NUCLEOTIDE SEQUENCE [LARGE SCALE MRNA]</scope>
    <source>
        <tissue>Lung</tissue>
        <tissue>Uterus</tissue>
    </source>
</reference>
<reference key="6">
    <citation type="journal article" date="2007" name="BMC Genomics">
        <title>The full-ORF clone resource of the German cDNA consortium.</title>
        <authorList>
            <person name="Bechtel S."/>
            <person name="Rosenfelder H."/>
            <person name="Duda A."/>
            <person name="Schmidt C.P."/>
            <person name="Ernst U."/>
            <person name="Wellenreuther R."/>
            <person name="Mehrle A."/>
            <person name="Schuster C."/>
            <person name="Bahr A."/>
            <person name="Bloecker H."/>
            <person name="Heubner D."/>
            <person name="Hoerlein A."/>
            <person name="Michel G."/>
            <person name="Wedler H."/>
            <person name="Koehrer K."/>
            <person name="Ottenwaelder B."/>
            <person name="Poustka A."/>
            <person name="Wiemann S."/>
            <person name="Schupp I."/>
        </authorList>
    </citation>
    <scope>NUCLEOTIDE SEQUENCE [LARGE SCALE MRNA] OF 1-104</scope>
    <source>
        <tissue>Brain</tissue>
    </source>
</reference>
<comment type="miscellaneous">
    <text>May be derived from an ancient transposon that has lost its ability to translocate.</text>
</comment>
<comment type="sequence caution" evidence="3">
    <conflict type="miscellaneous discrepancy">
        <sequence resource="EMBL-CDS" id="AAH17803"/>
    </conflict>
    <text>Contaminating sequence. Potential poly-A sequence.</text>
</comment>
<comment type="sequence caution" evidence="3">
    <conflict type="frameshift">
        <sequence resource="EMBL-CDS" id="AAH47754"/>
    </conflict>
</comment>
<name>ZBED5_HUMAN</name>
<organism>
    <name type="scientific">Homo sapiens</name>
    <name type="common">Human</name>
    <dbReference type="NCBI Taxonomy" id="9606"/>
    <lineage>
        <taxon>Eukaryota</taxon>
        <taxon>Metazoa</taxon>
        <taxon>Chordata</taxon>
        <taxon>Craniata</taxon>
        <taxon>Vertebrata</taxon>
        <taxon>Euteleostomi</taxon>
        <taxon>Mammalia</taxon>
        <taxon>Eutheria</taxon>
        <taxon>Euarchontoglires</taxon>
        <taxon>Primates</taxon>
        <taxon>Haplorrhini</taxon>
        <taxon>Catarrhini</taxon>
        <taxon>Hominidae</taxon>
        <taxon>Homo</taxon>
    </lineage>
</organism>